<gene>
    <name evidence="1" type="primary">adk</name>
    <name type="ordered locus">BA_0131</name>
    <name type="ordered locus">GBAA_0131</name>
    <name type="ordered locus">BAS0131</name>
</gene>
<evidence type="ECO:0000255" key="1">
    <source>
        <dbReference type="HAMAP-Rule" id="MF_00235"/>
    </source>
</evidence>
<dbReference type="EC" id="2.7.4.3" evidence="1"/>
<dbReference type="EMBL" id="AE016879">
    <property type="protein sequence ID" value="AAP24185.1"/>
    <property type="molecule type" value="Genomic_DNA"/>
</dbReference>
<dbReference type="EMBL" id="AE017334">
    <property type="protein sequence ID" value="AAT29211.1"/>
    <property type="molecule type" value="Genomic_DNA"/>
</dbReference>
<dbReference type="EMBL" id="AE017225">
    <property type="protein sequence ID" value="AAT52468.1"/>
    <property type="molecule type" value="Genomic_DNA"/>
</dbReference>
<dbReference type="RefSeq" id="NP_842699.1">
    <property type="nucleotide sequence ID" value="NC_003997.3"/>
</dbReference>
<dbReference type="RefSeq" id="WP_001048992.1">
    <property type="nucleotide sequence ID" value="NZ_WXXJ01000051.1"/>
</dbReference>
<dbReference type="RefSeq" id="YP_026417.1">
    <property type="nucleotide sequence ID" value="NC_005945.1"/>
</dbReference>
<dbReference type="SMR" id="Q81VQ9"/>
<dbReference type="STRING" id="261594.GBAA_0131"/>
<dbReference type="DNASU" id="1087031"/>
<dbReference type="KEGG" id="ban:BA_0131"/>
<dbReference type="KEGG" id="bar:GBAA_0131"/>
<dbReference type="KEGG" id="bat:BAS0131"/>
<dbReference type="PATRIC" id="fig|198094.11.peg.128"/>
<dbReference type="eggNOG" id="COG0563">
    <property type="taxonomic scope" value="Bacteria"/>
</dbReference>
<dbReference type="HOGENOM" id="CLU_032354_1_2_9"/>
<dbReference type="OMA" id="VYHEQTA"/>
<dbReference type="OrthoDB" id="9805030at2"/>
<dbReference type="UniPathway" id="UPA00588">
    <property type="reaction ID" value="UER00649"/>
</dbReference>
<dbReference type="Proteomes" id="UP000000427">
    <property type="component" value="Chromosome"/>
</dbReference>
<dbReference type="Proteomes" id="UP000000594">
    <property type="component" value="Chromosome"/>
</dbReference>
<dbReference type="GO" id="GO:0005737">
    <property type="term" value="C:cytoplasm"/>
    <property type="evidence" value="ECO:0007669"/>
    <property type="project" value="UniProtKB-SubCell"/>
</dbReference>
<dbReference type="GO" id="GO:0004017">
    <property type="term" value="F:adenylate kinase activity"/>
    <property type="evidence" value="ECO:0007669"/>
    <property type="project" value="UniProtKB-UniRule"/>
</dbReference>
<dbReference type="GO" id="GO:0005524">
    <property type="term" value="F:ATP binding"/>
    <property type="evidence" value="ECO:0007669"/>
    <property type="project" value="UniProtKB-UniRule"/>
</dbReference>
<dbReference type="GO" id="GO:0008270">
    <property type="term" value="F:zinc ion binding"/>
    <property type="evidence" value="ECO:0007669"/>
    <property type="project" value="UniProtKB-UniRule"/>
</dbReference>
<dbReference type="GO" id="GO:0044209">
    <property type="term" value="P:AMP salvage"/>
    <property type="evidence" value="ECO:0007669"/>
    <property type="project" value="UniProtKB-UniRule"/>
</dbReference>
<dbReference type="CDD" id="cd01428">
    <property type="entry name" value="ADK"/>
    <property type="match status" value="1"/>
</dbReference>
<dbReference type="FunFam" id="3.40.50.300:FF:000106">
    <property type="entry name" value="Adenylate kinase mitochondrial"/>
    <property type="match status" value="1"/>
</dbReference>
<dbReference type="Gene3D" id="3.40.50.300">
    <property type="entry name" value="P-loop containing nucleotide triphosphate hydrolases"/>
    <property type="match status" value="1"/>
</dbReference>
<dbReference type="HAMAP" id="MF_00235">
    <property type="entry name" value="Adenylate_kinase_Adk"/>
    <property type="match status" value="1"/>
</dbReference>
<dbReference type="InterPro" id="IPR006259">
    <property type="entry name" value="Adenyl_kin_sub"/>
</dbReference>
<dbReference type="InterPro" id="IPR000850">
    <property type="entry name" value="Adenylat/UMP-CMP_kin"/>
</dbReference>
<dbReference type="InterPro" id="IPR033690">
    <property type="entry name" value="Adenylat_kinase_CS"/>
</dbReference>
<dbReference type="InterPro" id="IPR007862">
    <property type="entry name" value="Adenylate_kinase_lid-dom"/>
</dbReference>
<dbReference type="InterPro" id="IPR027417">
    <property type="entry name" value="P-loop_NTPase"/>
</dbReference>
<dbReference type="NCBIfam" id="TIGR01351">
    <property type="entry name" value="adk"/>
    <property type="match status" value="1"/>
</dbReference>
<dbReference type="NCBIfam" id="NF001380">
    <property type="entry name" value="PRK00279.1-2"/>
    <property type="match status" value="1"/>
</dbReference>
<dbReference type="NCBIfam" id="NF001381">
    <property type="entry name" value="PRK00279.1-3"/>
    <property type="match status" value="1"/>
</dbReference>
<dbReference type="NCBIfam" id="NF011100">
    <property type="entry name" value="PRK14527.1"/>
    <property type="match status" value="1"/>
</dbReference>
<dbReference type="PANTHER" id="PTHR23359">
    <property type="entry name" value="NUCLEOTIDE KINASE"/>
    <property type="match status" value="1"/>
</dbReference>
<dbReference type="Pfam" id="PF00406">
    <property type="entry name" value="ADK"/>
    <property type="match status" value="1"/>
</dbReference>
<dbReference type="Pfam" id="PF05191">
    <property type="entry name" value="ADK_lid"/>
    <property type="match status" value="1"/>
</dbReference>
<dbReference type="PRINTS" id="PR00094">
    <property type="entry name" value="ADENYLTKNASE"/>
</dbReference>
<dbReference type="SUPFAM" id="SSF52540">
    <property type="entry name" value="P-loop containing nucleoside triphosphate hydrolases"/>
    <property type="match status" value="1"/>
</dbReference>
<dbReference type="PROSITE" id="PS00113">
    <property type="entry name" value="ADENYLATE_KINASE"/>
    <property type="match status" value="1"/>
</dbReference>
<organism>
    <name type="scientific">Bacillus anthracis</name>
    <dbReference type="NCBI Taxonomy" id="1392"/>
    <lineage>
        <taxon>Bacteria</taxon>
        <taxon>Bacillati</taxon>
        <taxon>Bacillota</taxon>
        <taxon>Bacilli</taxon>
        <taxon>Bacillales</taxon>
        <taxon>Bacillaceae</taxon>
        <taxon>Bacillus</taxon>
        <taxon>Bacillus cereus group</taxon>
    </lineage>
</organism>
<name>KAD_BACAN</name>
<keyword id="KW-0067">ATP-binding</keyword>
<keyword id="KW-0963">Cytoplasm</keyword>
<keyword id="KW-0418">Kinase</keyword>
<keyword id="KW-0479">Metal-binding</keyword>
<keyword id="KW-0545">Nucleotide biosynthesis</keyword>
<keyword id="KW-0547">Nucleotide-binding</keyword>
<keyword id="KW-1185">Reference proteome</keyword>
<keyword id="KW-0808">Transferase</keyword>
<keyword id="KW-0862">Zinc</keyword>
<reference key="1">
    <citation type="journal article" date="2003" name="Nature">
        <title>The genome sequence of Bacillus anthracis Ames and comparison to closely related bacteria.</title>
        <authorList>
            <person name="Read T.D."/>
            <person name="Peterson S.N."/>
            <person name="Tourasse N.J."/>
            <person name="Baillie L.W."/>
            <person name="Paulsen I.T."/>
            <person name="Nelson K.E."/>
            <person name="Tettelin H."/>
            <person name="Fouts D.E."/>
            <person name="Eisen J.A."/>
            <person name="Gill S.R."/>
            <person name="Holtzapple E.K."/>
            <person name="Okstad O.A."/>
            <person name="Helgason E."/>
            <person name="Rilstone J."/>
            <person name="Wu M."/>
            <person name="Kolonay J.F."/>
            <person name="Beanan M.J."/>
            <person name="Dodson R.J."/>
            <person name="Brinkac L.M."/>
            <person name="Gwinn M.L."/>
            <person name="DeBoy R.T."/>
            <person name="Madpu R."/>
            <person name="Daugherty S.C."/>
            <person name="Durkin A.S."/>
            <person name="Haft D.H."/>
            <person name="Nelson W.C."/>
            <person name="Peterson J.D."/>
            <person name="Pop M."/>
            <person name="Khouri H.M."/>
            <person name="Radune D."/>
            <person name="Benton J.L."/>
            <person name="Mahamoud Y."/>
            <person name="Jiang L."/>
            <person name="Hance I.R."/>
            <person name="Weidman J.F."/>
            <person name="Berry K.J."/>
            <person name="Plaut R.D."/>
            <person name="Wolf A.M."/>
            <person name="Watkins K.L."/>
            <person name="Nierman W.C."/>
            <person name="Hazen A."/>
            <person name="Cline R.T."/>
            <person name="Redmond C."/>
            <person name="Thwaite J.E."/>
            <person name="White O."/>
            <person name="Salzberg S.L."/>
            <person name="Thomason B."/>
            <person name="Friedlander A.M."/>
            <person name="Koehler T.M."/>
            <person name="Hanna P.C."/>
            <person name="Kolstoe A.-B."/>
            <person name="Fraser C.M."/>
        </authorList>
    </citation>
    <scope>NUCLEOTIDE SEQUENCE [LARGE SCALE GENOMIC DNA]</scope>
    <source>
        <strain>Ames / isolate Porton</strain>
    </source>
</reference>
<reference key="2">
    <citation type="journal article" date="2009" name="J. Bacteriol.">
        <title>The complete genome sequence of Bacillus anthracis Ames 'Ancestor'.</title>
        <authorList>
            <person name="Ravel J."/>
            <person name="Jiang L."/>
            <person name="Stanley S.T."/>
            <person name="Wilson M.R."/>
            <person name="Decker R.S."/>
            <person name="Read T.D."/>
            <person name="Worsham P."/>
            <person name="Keim P.S."/>
            <person name="Salzberg S.L."/>
            <person name="Fraser-Liggett C.M."/>
            <person name="Rasko D.A."/>
        </authorList>
    </citation>
    <scope>NUCLEOTIDE SEQUENCE [LARGE SCALE GENOMIC DNA]</scope>
    <source>
        <strain>Ames ancestor</strain>
    </source>
</reference>
<reference key="3">
    <citation type="submission" date="2004-01" db="EMBL/GenBank/DDBJ databases">
        <title>Complete genome sequence of Bacillus anthracis Sterne.</title>
        <authorList>
            <person name="Brettin T.S."/>
            <person name="Bruce D."/>
            <person name="Challacombe J.F."/>
            <person name="Gilna P."/>
            <person name="Han C."/>
            <person name="Hill K."/>
            <person name="Hitchcock P."/>
            <person name="Jackson P."/>
            <person name="Keim P."/>
            <person name="Longmire J."/>
            <person name="Lucas S."/>
            <person name="Okinaka R."/>
            <person name="Richardson P."/>
            <person name="Rubin E."/>
            <person name="Tice H."/>
        </authorList>
    </citation>
    <scope>NUCLEOTIDE SEQUENCE [LARGE SCALE GENOMIC DNA]</scope>
    <source>
        <strain>Sterne</strain>
    </source>
</reference>
<protein>
    <recommendedName>
        <fullName evidence="1">Adenylate kinase</fullName>
        <shortName evidence="1">AK</shortName>
        <ecNumber evidence="1">2.7.4.3</ecNumber>
    </recommendedName>
    <alternativeName>
        <fullName evidence="1">ATP-AMP transphosphorylase</fullName>
    </alternativeName>
    <alternativeName>
        <fullName evidence="1">ATP:AMP phosphotransferase</fullName>
    </alternativeName>
    <alternativeName>
        <fullName evidence="1">Adenylate monophosphate kinase</fullName>
    </alternativeName>
</protein>
<accession>Q81VQ9</accession>
<accession>Q6I4R3</accession>
<accession>Q6KYF9</accession>
<comment type="function">
    <text evidence="1">Catalyzes the reversible transfer of the terminal phosphate group between ATP and AMP. Plays an important role in cellular energy homeostasis and in adenine nucleotide metabolism.</text>
</comment>
<comment type="catalytic activity">
    <reaction evidence="1">
        <text>AMP + ATP = 2 ADP</text>
        <dbReference type="Rhea" id="RHEA:12973"/>
        <dbReference type="ChEBI" id="CHEBI:30616"/>
        <dbReference type="ChEBI" id="CHEBI:456215"/>
        <dbReference type="ChEBI" id="CHEBI:456216"/>
        <dbReference type="EC" id="2.7.4.3"/>
    </reaction>
</comment>
<comment type="pathway">
    <text evidence="1">Purine metabolism; AMP biosynthesis via salvage pathway; AMP from ADP: step 1/1.</text>
</comment>
<comment type="subunit">
    <text evidence="1">Monomer.</text>
</comment>
<comment type="subcellular location">
    <subcellularLocation>
        <location evidence="1">Cytoplasm</location>
    </subcellularLocation>
</comment>
<comment type="domain">
    <text evidence="1">Consists of three domains, a large central CORE domain and two small peripheral domains, NMPbind and LID, which undergo movements during catalysis. The LID domain closes over the site of phosphoryl transfer upon ATP binding. Assembling and dissambling the active center during each catalytic cycle provides an effective means to prevent ATP hydrolysis. Some bacteria have evolved a zinc-coordinating structure that stabilizes the LID domain.</text>
</comment>
<comment type="similarity">
    <text evidence="1">Belongs to the adenylate kinase family.</text>
</comment>
<feature type="chain" id="PRO_0000158719" description="Adenylate kinase">
    <location>
        <begin position="1"/>
        <end position="216"/>
    </location>
</feature>
<feature type="region of interest" description="NMP" evidence="1">
    <location>
        <begin position="30"/>
        <end position="59"/>
    </location>
</feature>
<feature type="region of interest" description="LID" evidence="1">
    <location>
        <begin position="126"/>
        <end position="163"/>
    </location>
</feature>
<feature type="binding site" evidence="1">
    <location>
        <begin position="10"/>
        <end position="15"/>
    </location>
    <ligand>
        <name>ATP</name>
        <dbReference type="ChEBI" id="CHEBI:30616"/>
    </ligand>
</feature>
<feature type="binding site" evidence="1">
    <location>
        <position position="31"/>
    </location>
    <ligand>
        <name>AMP</name>
        <dbReference type="ChEBI" id="CHEBI:456215"/>
    </ligand>
</feature>
<feature type="binding site" evidence="1">
    <location>
        <position position="36"/>
    </location>
    <ligand>
        <name>AMP</name>
        <dbReference type="ChEBI" id="CHEBI:456215"/>
    </ligand>
</feature>
<feature type="binding site" evidence="1">
    <location>
        <begin position="57"/>
        <end position="59"/>
    </location>
    <ligand>
        <name>AMP</name>
        <dbReference type="ChEBI" id="CHEBI:456215"/>
    </ligand>
</feature>
<feature type="binding site" evidence="1">
    <location>
        <begin position="85"/>
        <end position="88"/>
    </location>
    <ligand>
        <name>AMP</name>
        <dbReference type="ChEBI" id="CHEBI:456215"/>
    </ligand>
</feature>
<feature type="binding site" evidence="1">
    <location>
        <position position="92"/>
    </location>
    <ligand>
        <name>AMP</name>
        <dbReference type="ChEBI" id="CHEBI:456215"/>
    </ligand>
</feature>
<feature type="binding site" evidence="1">
    <location>
        <position position="127"/>
    </location>
    <ligand>
        <name>ATP</name>
        <dbReference type="ChEBI" id="CHEBI:30616"/>
    </ligand>
</feature>
<feature type="binding site" evidence="1">
    <location>
        <position position="130"/>
    </location>
    <ligand>
        <name>Zn(2+)</name>
        <dbReference type="ChEBI" id="CHEBI:29105"/>
        <note>structural</note>
    </ligand>
</feature>
<feature type="binding site" evidence="1">
    <location>
        <position position="133"/>
    </location>
    <ligand>
        <name>Zn(2+)</name>
        <dbReference type="ChEBI" id="CHEBI:29105"/>
        <note>structural</note>
    </ligand>
</feature>
<feature type="binding site" evidence="1">
    <location>
        <begin position="136"/>
        <end position="137"/>
    </location>
    <ligand>
        <name>ATP</name>
        <dbReference type="ChEBI" id="CHEBI:30616"/>
    </ligand>
</feature>
<feature type="binding site" evidence="1">
    <location>
        <position position="150"/>
    </location>
    <ligand>
        <name>Zn(2+)</name>
        <dbReference type="ChEBI" id="CHEBI:29105"/>
        <note>structural</note>
    </ligand>
</feature>
<feature type="binding site" evidence="1">
    <location>
        <position position="153"/>
    </location>
    <ligand>
        <name>Zn(2+)</name>
        <dbReference type="ChEBI" id="CHEBI:29105"/>
        <note>structural</note>
    </ligand>
</feature>
<feature type="binding site" evidence="1">
    <location>
        <position position="160"/>
    </location>
    <ligand>
        <name>AMP</name>
        <dbReference type="ChEBI" id="CHEBI:456215"/>
    </ligand>
</feature>
<feature type="binding site" evidence="1">
    <location>
        <position position="171"/>
    </location>
    <ligand>
        <name>AMP</name>
        <dbReference type="ChEBI" id="CHEBI:456215"/>
    </ligand>
</feature>
<feature type="binding site" evidence="1">
    <location>
        <position position="199"/>
    </location>
    <ligand>
        <name>ATP</name>
        <dbReference type="ChEBI" id="CHEBI:30616"/>
    </ligand>
</feature>
<proteinExistence type="inferred from homology"/>
<sequence>MNLILMGLPGAGKGTQAEQIVAKYNIPHISTGDMFRAAMKAETEMGLQAKSFIDKGALVPDEVTIGIVRERLSQEDCVRGFLLDGFPRTVAQASALEEIMKDLGKKIDYVLNINVDSGLLLKRLTGRRICKECGATYHLEFNAPAKADVCDKCGGELYQRSDDNEETVANRLDVNIKQTKPLLDFYEELGYLQSINGEQDINKVFADIDVLIGGLA</sequence>